<accession>Q5FNL4</accession>
<protein>
    <recommendedName>
        <fullName evidence="1">Phosphoribosylaminoimidazole-succinocarboxamide synthase</fullName>
        <ecNumber evidence="1">6.3.2.6</ecNumber>
    </recommendedName>
    <alternativeName>
        <fullName evidence="1">SAICAR synthetase</fullName>
    </alternativeName>
</protein>
<reference key="1">
    <citation type="journal article" date="2005" name="Nat. Biotechnol.">
        <title>Complete genome sequence of the acetic acid bacterium Gluconobacter oxydans.</title>
        <authorList>
            <person name="Prust C."/>
            <person name="Hoffmeister M."/>
            <person name="Liesegang H."/>
            <person name="Wiezer A."/>
            <person name="Fricke W.F."/>
            <person name="Ehrenreich A."/>
            <person name="Gottschalk G."/>
            <person name="Deppenmeier U."/>
        </authorList>
    </citation>
    <scope>NUCLEOTIDE SEQUENCE [LARGE SCALE GENOMIC DNA]</scope>
    <source>
        <strain>621H</strain>
    </source>
</reference>
<evidence type="ECO:0000255" key="1">
    <source>
        <dbReference type="HAMAP-Rule" id="MF_00137"/>
    </source>
</evidence>
<keyword id="KW-0067">ATP-binding</keyword>
<keyword id="KW-0436">Ligase</keyword>
<keyword id="KW-0547">Nucleotide-binding</keyword>
<keyword id="KW-0658">Purine biosynthesis</keyword>
<keyword id="KW-1185">Reference proteome</keyword>
<gene>
    <name evidence="1" type="primary">purC</name>
    <name type="ordered locus">GOX2300</name>
</gene>
<feature type="chain" id="PRO_1000018709" description="Phosphoribosylaminoimidazole-succinocarboxamide synthase">
    <location>
        <begin position="1"/>
        <end position="254"/>
    </location>
</feature>
<sequence>MARRRQLYEGKAKVLFEGPEPGTLVQYFKDDATAGNGAKSGIITGKGVLNNRISEYLMLKLHEINIPTHFIRRLNMREQLIREVEIIPLEVVVRNVAAGSLSKRLGIPEGTRLPRTIIEYYYKNDALGDPMVSEEHIAAFNWAAPQDMDDMNQLALRTNDFLMGMFTAVGITLVDFKLEFGRIWEGEEMRILLADEISPDNCRLWDSKTNEKMDKDRFRRDMGRVEEAYQEVAKRLGILPESGNGDLKGPEAVQ</sequence>
<proteinExistence type="inferred from homology"/>
<organism>
    <name type="scientific">Gluconobacter oxydans (strain 621H)</name>
    <name type="common">Gluconobacter suboxydans</name>
    <dbReference type="NCBI Taxonomy" id="290633"/>
    <lineage>
        <taxon>Bacteria</taxon>
        <taxon>Pseudomonadati</taxon>
        <taxon>Pseudomonadota</taxon>
        <taxon>Alphaproteobacteria</taxon>
        <taxon>Acetobacterales</taxon>
        <taxon>Acetobacteraceae</taxon>
        <taxon>Gluconobacter</taxon>
    </lineage>
</organism>
<comment type="catalytic activity">
    <reaction evidence="1">
        <text>5-amino-1-(5-phospho-D-ribosyl)imidazole-4-carboxylate + L-aspartate + ATP = (2S)-2-[5-amino-1-(5-phospho-beta-D-ribosyl)imidazole-4-carboxamido]succinate + ADP + phosphate + 2 H(+)</text>
        <dbReference type="Rhea" id="RHEA:22628"/>
        <dbReference type="ChEBI" id="CHEBI:15378"/>
        <dbReference type="ChEBI" id="CHEBI:29991"/>
        <dbReference type="ChEBI" id="CHEBI:30616"/>
        <dbReference type="ChEBI" id="CHEBI:43474"/>
        <dbReference type="ChEBI" id="CHEBI:58443"/>
        <dbReference type="ChEBI" id="CHEBI:77657"/>
        <dbReference type="ChEBI" id="CHEBI:456216"/>
        <dbReference type="EC" id="6.3.2.6"/>
    </reaction>
</comment>
<comment type="pathway">
    <text evidence="1">Purine metabolism; IMP biosynthesis via de novo pathway; 5-amino-1-(5-phospho-D-ribosyl)imidazole-4-carboxamide from 5-amino-1-(5-phospho-D-ribosyl)imidazole-4-carboxylate: step 1/2.</text>
</comment>
<comment type="similarity">
    <text evidence="1">Belongs to the SAICAR synthetase family.</text>
</comment>
<dbReference type="EC" id="6.3.2.6" evidence="1"/>
<dbReference type="EMBL" id="CP000009">
    <property type="protein sequence ID" value="AAW62033.1"/>
    <property type="molecule type" value="Genomic_DNA"/>
</dbReference>
<dbReference type="RefSeq" id="WP_011253803.1">
    <property type="nucleotide sequence ID" value="NZ_LT900338.1"/>
</dbReference>
<dbReference type="SMR" id="Q5FNL4"/>
<dbReference type="STRING" id="290633.GOX2300"/>
<dbReference type="GeneID" id="56906668"/>
<dbReference type="KEGG" id="gox:GOX2300"/>
<dbReference type="eggNOG" id="COG0152">
    <property type="taxonomic scope" value="Bacteria"/>
</dbReference>
<dbReference type="HOGENOM" id="CLU_061495_2_0_5"/>
<dbReference type="UniPathway" id="UPA00074">
    <property type="reaction ID" value="UER00131"/>
</dbReference>
<dbReference type="Proteomes" id="UP000006375">
    <property type="component" value="Chromosome"/>
</dbReference>
<dbReference type="GO" id="GO:0005829">
    <property type="term" value="C:cytosol"/>
    <property type="evidence" value="ECO:0007669"/>
    <property type="project" value="TreeGrafter"/>
</dbReference>
<dbReference type="GO" id="GO:0005524">
    <property type="term" value="F:ATP binding"/>
    <property type="evidence" value="ECO:0007669"/>
    <property type="project" value="UniProtKB-KW"/>
</dbReference>
<dbReference type="GO" id="GO:0004639">
    <property type="term" value="F:phosphoribosylaminoimidazolesuccinocarboxamide synthase activity"/>
    <property type="evidence" value="ECO:0007669"/>
    <property type="project" value="UniProtKB-UniRule"/>
</dbReference>
<dbReference type="GO" id="GO:0006189">
    <property type="term" value="P:'de novo' IMP biosynthetic process"/>
    <property type="evidence" value="ECO:0007669"/>
    <property type="project" value="UniProtKB-UniRule"/>
</dbReference>
<dbReference type="GO" id="GO:0009236">
    <property type="term" value="P:cobalamin biosynthetic process"/>
    <property type="evidence" value="ECO:0007669"/>
    <property type="project" value="InterPro"/>
</dbReference>
<dbReference type="CDD" id="cd01415">
    <property type="entry name" value="SAICAR_synt_PurC"/>
    <property type="match status" value="1"/>
</dbReference>
<dbReference type="FunFam" id="3.30.470.20:FF:000006">
    <property type="entry name" value="Phosphoribosylaminoimidazole-succinocarboxamide synthase"/>
    <property type="match status" value="1"/>
</dbReference>
<dbReference type="Gene3D" id="3.30.470.20">
    <property type="entry name" value="ATP-grasp fold, B domain"/>
    <property type="match status" value="1"/>
</dbReference>
<dbReference type="Gene3D" id="3.30.200.20">
    <property type="entry name" value="Phosphorylase Kinase, domain 1"/>
    <property type="match status" value="1"/>
</dbReference>
<dbReference type="HAMAP" id="MF_00137">
    <property type="entry name" value="SAICAR_synth"/>
    <property type="match status" value="1"/>
</dbReference>
<dbReference type="InterPro" id="IPR028923">
    <property type="entry name" value="SAICAR_synt/ADE2_N"/>
</dbReference>
<dbReference type="InterPro" id="IPR033934">
    <property type="entry name" value="SAICAR_synt_PurC"/>
</dbReference>
<dbReference type="InterPro" id="IPR001636">
    <property type="entry name" value="SAICAR_synth"/>
</dbReference>
<dbReference type="InterPro" id="IPR050089">
    <property type="entry name" value="SAICAR_synthetase"/>
</dbReference>
<dbReference type="InterPro" id="IPR018236">
    <property type="entry name" value="SAICAR_synthetase_CS"/>
</dbReference>
<dbReference type="NCBIfam" id="TIGR00081">
    <property type="entry name" value="purC"/>
    <property type="match status" value="1"/>
</dbReference>
<dbReference type="PANTHER" id="PTHR43599">
    <property type="entry name" value="MULTIFUNCTIONAL PROTEIN ADE2"/>
    <property type="match status" value="1"/>
</dbReference>
<dbReference type="PANTHER" id="PTHR43599:SF3">
    <property type="entry name" value="SI:DKEY-6E2.2"/>
    <property type="match status" value="1"/>
</dbReference>
<dbReference type="Pfam" id="PF01259">
    <property type="entry name" value="SAICAR_synt"/>
    <property type="match status" value="1"/>
</dbReference>
<dbReference type="SUPFAM" id="SSF56104">
    <property type="entry name" value="SAICAR synthase-like"/>
    <property type="match status" value="1"/>
</dbReference>
<dbReference type="PROSITE" id="PS01057">
    <property type="entry name" value="SAICAR_SYNTHETASE_1"/>
    <property type="match status" value="1"/>
</dbReference>
<dbReference type="PROSITE" id="PS01058">
    <property type="entry name" value="SAICAR_SYNTHETASE_2"/>
    <property type="match status" value="1"/>
</dbReference>
<name>PUR7_GLUOX</name>